<organism>
    <name type="scientific">Mycobacterium tuberculosis (strain ATCC 25618 / H37Rv)</name>
    <dbReference type="NCBI Taxonomy" id="83332"/>
    <lineage>
        <taxon>Bacteria</taxon>
        <taxon>Bacillati</taxon>
        <taxon>Actinomycetota</taxon>
        <taxon>Actinomycetes</taxon>
        <taxon>Mycobacteriales</taxon>
        <taxon>Mycobacteriaceae</taxon>
        <taxon>Mycobacterium</taxon>
        <taxon>Mycobacterium tuberculosis complex</taxon>
    </lineage>
</organism>
<name>RELB_MYCTU</name>
<accession>O50462</accession>
<accession>L0T930</accession>
<comment type="function">
    <text evidence="2">Antitoxin component of a type II toxin-antitoxin (TA) system. Upon expression in M.smegmatis neutralizes the effect of toxin RelE.</text>
</comment>
<comment type="function">
    <text evidence="1">Induces its own promoter, in combination with RelE represses its own promoter. Binds DNA in complex with toxin RelE but not alone.</text>
</comment>
<comment type="subunit">
    <text evidence="1 2">Interacts with toxin RelE, which neutralizes its toxicity. Also interacts with toxins RelG and RelK in vitro, in M.smegmatis coexpression with non-cognate toxins neutralizes the toxicity of RelG while increasing the toxicity of RelK.</text>
</comment>
<comment type="induction">
    <text evidence="1">Expressed in log phase cells. A member of the relBE operon.</text>
</comment>
<comment type="miscellaneous">
    <text>Was identified as a high-confidence drug target.</text>
</comment>
<comment type="similarity">
    <text evidence="3">Belongs to the phD/YefM antitoxin family.</text>
</comment>
<feature type="chain" id="PRO_0000406201" description="Antitoxin RelB">
    <location>
        <begin position="1"/>
        <end position="89"/>
    </location>
</feature>
<keyword id="KW-0238">DNA-binding</keyword>
<keyword id="KW-1185">Reference proteome</keyword>
<keyword id="KW-0678">Repressor</keyword>
<keyword id="KW-1277">Toxin-antitoxin system</keyword>
<keyword id="KW-0804">Transcription</keyword>
<keyword id="KW-0805">Transcription regulation</keyword>
<reference key="1">
    <citation type="journal article" date="1998" name="Nature">
        <title>Deciphering the biology of Mycobacterium tuberculosis from the complete genome sequence.</title>
        <authorList>
            <person name="Cole S.T."/>
            <person name="Brosch R."/>
            <person name="Parkhill J."/>
            <person name="Garnier T."/>
            <person name="Churcher C.M."/>
            <person name="Harris D.E."/>
            <person name="Gordon S.V."/>
            <person name="Eiglmeier K."/>
            <person name="Gas S."/>
            <person name="Barry C.E. III"/>
            <person name="Tekaia F."/>
            <person name="Badcock K."/>
            <person name="Basham D."/>
            <person name="Brown D."/>
            <person name="Chillingworth T."/>
            <person name="Connor R."/>
            <person name="Davies R.M."/>
            <person name="Devlin K."/>
            <person name="Feltwell T."/>
            <person name="Gentles S."/>
            <person name="Hamlin N."/>
            <person name="Holroyd S."/>
            <person name="Hornsby T."/>
            <person name="Jagels K."/>
            <person name="Krogh A."/>
            <person name="McLean J."/>
            <person name="Moule S."/>
            <person name="Murphy L.D."/>
            <person name="Oliver S."/>
            <person name="Osborne J."/>
            <person name="Quail M.A."/>
            <person name="Rajandream M.A."/>
            <person name="Rogers J."/>
            <person name="Rutter S."/>
            <person name="Seeger K."/>
            <person name="Skelton S."/>
            <person name="Squares S."/>
            <person name="Squares R."/>
            <person name="Sulston J.E."/>
            <person name="Taylor K."/>
            <person name="Whitehead S."/>
            <person name="Barrell B.G."/>
        </authorList>
    </citation>
    <scope>NUCLEOTIDE SEQUENCE [LARGE SCALE GENOMIC DNA]</scope>
    <source>
        <strain>ATCC 25618 / H37Rv</strain>
    </source>
</reference>
<reference key="2">
    <citation type="journal article" date="2008" name="BMC Syst. Biol.">
        <title>targetTB: a target identification pipeline for Mycobacterium tuberculosis through an interactome, reactome and genome-scale structural analysis.</title>
        <authorList>
            <person name="Raman K."/>
            <person name="Yeturu K."/>
            <person name="Chandra N."/>
        </authorList>
    </citation>
    <scope>IDENTIFICATION AS A DRUG TARGET [LARGE SCALE ANALYSIS]</scope>
</reference>
<reference key="3">
    <citation type="journal article" date="2009" name="J. Bacteriol.">
        <title>Three Mycobacterium tuberculosis Rel toxin-antitoxin modules inhibit mycobacterial growth and are expressed in infected human macrophages.</title>
        <authorList>
            <person name="Korch S.B."/>
            <person name="Contreras H."/>
            <person name="Clark-Curtiss J.E."/>
        </authorList>
    </citation>
    <scope>FUNCTION AS AN ANTITOXIN</scope>
    <scope>FUNCTION AS A TRANSCRIPTIONAL REGULATOR</scope>
    <scope>EXPRESSION IN M.SMEGMATIS</scope>
    <scope>SUBUNIT</scope>
    <scope>INDUCTION</scope>
    <scope>OPERON STRUCTURE</scope>
    <source>
        <strain>ATCC 25618 / H37Rv</strain>
    </source>
</reference>
<reference key="4">
    <citation type="journal article" date="2009" name="PLoS Genet.">
        <title>Comprehensive functional analysis of Mycobacterium tuberculosis toxin-antitoxin systems: implications for pathogenesis, stress responses, and evolution.</title>
        <authorList>
            <person name="Ramage H.R."/>
            <person name="Connolly L.E."/>
            <person name="Cox J.S."/>
        </authorList>
    </citation>
    <scope>EXPRESSION IN M.SMEGMATIS</scope>
    <scope>FUNCTION AS AN ANTITOXIN</scope>
    <source>
        <strain>ATCC 35801 / TMC 107 / Erdman</strain>
    </source>
</reference>
<reference key="5">
    <citation type="journal article" date="2010" name="PLoS ONE">
        <title>Characterization of the interaction and cross-regulation of three Mycobacterium tuberculosis RelBE modules.</title>
        <authorList>
            <person name="Yang M."/>
            <person name="Gao C."/>
            <person name="Wang Y."/>
            <person name="Zhang H."/>
            <person name="He Z.G."/>
        </authorList>
    </citation>
    <scope>FUNCTION AS AN ANTITOXIN</scope>
    <scope>SUBUNIT</scope>
    <scope>INTERACTION WITH RELG</scope>
    <source>
        <strain>ATCC 25618 / H37Rv</strain>
    </source>
</reference>
<reference key="6">
    <citation type="journal article" date="2011" name="Mol. Cell. Proteomics">
        <title>Proteogenomic analysis of Mycobacterium tuberculosis by high resolution mass spectrometry.</title>
        <authorList>
            <person name="Kelkar D.S."/>
            <person name="Kumar D."/>
            <person name="Kumar P."/>
            <person name="Balakrishnan L."/>
            <person name="Muthusamy B."/>
            <person name="Yadav A.K."/>
            <person name="Shrivastava P."/>
            <person name="Marimuthu A."/>
            <person name="Anand S."/>
            <person name="Sundaram H."/>
            <person name="Kingsbury R."/>
            <person name="Harsha H.C."/>
            <person name="Nair B."/>
            <person name="Prasad T.S."/>
            <person name="Chauhan D.S."/>
            <person name="Katoch K."/>
            <person name="Katoch V.M."/>
            <person name="Kumar P."/>
            <person name="Chaerkady R."/>
            <person name="Ramachandran S."/>
            <person name="Dash D."/>
            <person name="Pandey A."/>
        </authorList>
    </citation>
    <scope>IDENTIFICATION BY MASS SPECTROMETRY [LARGE SCALE ANALYSIS]</scope>
    <source>
        <strain>ATCC 25618 / H37Rv</strain>
    </source>
</reference>
<evidence type="ECO:0000269" key="1">
    <source>
    </source>
</evidence>
<evidence type="ECO:0000269" key="2">
    <source>
    </source>
</evidence>
<evidence type="ECO:0000305" key="3"/>
<sequence>MAVVPLGEVRNRLSEYVAEVELTHERITITRHGHPAAVLISADDLASIEETLEVLRTPGASEAIREGLADVAAGRFVSNDEIRNRYTAR</sequence>
<proteinExistence type="evidence at protein level"/>
<dbReference type="EMBL" id="AL123456">
    <property type="protein sequence ID" value="CCP44003.1"/>
    <property type="molecule type" value="Genomic_DNA"/>
</dbReference>
<dbReference type="PIR" id="F70953">
    <property type="entry name" value="F70953"/>
</dbReference>
<dbReference type="RefSeq" id="NP_215763.1">
    <property type="nucleotide sequence ID" value="NC_000962.3"/>
</dbReference>
<dbReference type="RefSeq" id="WP_003406322.1">
    <property type="nucleotide sequence ID" value="NZ_NVQJ01000049.1"/>
</dbReference>
<dbReference type="SMR" id="O50462"/>
<dbReference type="FunCoup" id="O50462">
    <property type="interactions" value="1"/>
</dbReference>
<dbReference type="STRING" id="83332.Rv1247c"/>
<dbReference type="PaxDb" id="83332-Rv1247c"/>
<dbReference type="DNASU" id="887086"/>
<dbReference type="GeneID" id="887086"/>
<dbReference type="KEGG" id="mtu:Rv1247c"/>
<dbReference type="KEGG" id="mtv:RVBD_1247c"/>
<dbReference type="TubercuList" id="Rv1247c"/>
<dbReference type="eggNOG" id="COG2161">
    <property type="taxonomic scope" value="Bacteria"/>
</dbReference>
<dbReference type="InParanoid" id="O50462"/>
<dbReference type="OrthoDB" id="488160at2"/>
<dbReference type="PhylomeDB" id="O50462"/>
<dbReference type="Proteomes" id="UP000001584">
    <property type="component" value="Chromosome"/>
</dbReference>
<dbReference type="GO" id="GO:0003700">
    <property type="term" value="F:DNA-binding transcription factor activity"/>
    <property type="evidence" value="ECO:0000318"/>
    <property type="project" value="GO_Central"/>
</dbReference>
<dbReference type="GO" id="GO:0043565">
    <property type="term" value="F:sequence-specific DNA binding"/>
    <property type="evidence" value="ECO:0000318"/>
    <property type="project" value="GO_Central"/>
</dbReference>
<dbReference type="GO" id="GO:0097351">
    <property type="term" value="F:toxin sequestering activity"/>
    <property type="evidence" value="ECO:0000353"/>
    <property type="project" value="MTBBASE"/>
</dbReference>
<dbReference type="GO" id="GO:0045927">
    <property type="term" value="P:positive regulation of growth"/>
    <property type="evidence" value="ECO:0000315"/>
    <property type="project" value="MTBBASE"/>
</dbReference>
<dbReference type="GO" id="GO:0006355">
    <property type="term" value="P:regulation of DNA-templated transcription"/>
    <property type="evidence" value="ECO:0000318"/>
    <property type="project" value="GO_Central"/>
</dbReference>
<dbReference type="Gene3D" id="1.10.1220.170">
    <property type="match status" value="1"/>
</dbReference>
<dbReference type="Gene3D" id="3.40.1620.10">
    <property type="entry name" value="YefM-like domain"/>
    <property type="match status" value="1"/>
</dbReference>
<dbReference type="InterPro" id="IPR006442">
    <property type="entry name" value="Antitoxin_Phd/YefM"/>
</dbReference>
<dbReference type="InterPro" id="IPR051405">
    <property type="entry name" value="phD/YefM_antitoxin"/>
</dbReference>
<dbReference type="InterPro" id="IPR036165">
    <property type="entry name" value="YefM-like_sf"/>
</dbReference>
<dbReference type="NCBIfam" id="TIGR01552">
    <property type="entry name" value="phd_fam"/>
    <property type="match status" value="1"/>
</dbReference>
<dbReference type="PANTHER" id="PTHR33713:SF10">
    <property type="entry name" value="ANTITOXIN YAFN"/>
    <property type="match status" value="1"/>
</dbReference>
<dbReference type="PANTHER" id="PTHR33713">
    <property type="entry name" value="ANTITOXIN YAFN-RELATED"/>
    <property type="match status" value="1"/>
</dbReference>
<dbReference type="Pfam" id="PF02604">
    <property type="entry name" value="PhdYeFM_antitox"/>
    <property type="match status" value="1"/>
</dbReference>
<dbReference type="SUPFAM" id="SSF143120">
    <property type="entry name" value="YefM-like"/>
    <property type="match status" value="1"/>
</dbReference>
<protein>
    <recommendedName>
        <fullName>Antitoxin RelB</fullName>
    </recommendedName>
</protein>
<gene>
    <name type="primary">relB</name>
    <name type="synonym">relB1</name>
    <name type="ordered locus">Rv1247c</name>
</gene>